<sequence length="37" mass="4757">NYCYYMVDYLTFYNIKNYKIYTYAQRLLEIYFSYLSI</sequence>
<name>24KD_PLACH</name>
<dbReference type="EMBL" id="X04892">
    <property type="protein sequence ID" value="CAA28580.1"/>
    <property type="molecule type" value="mRNA"/>
</dbReference>
<organism>
    <name type="scientific">Plasmodium chabaudi</name>
    <dbReference type="NCBI Taxonomy" id="5825"/>
    <lineage>
        <taxon>Eukaryota</taxon>
        <taxon>Sar</taxon>
        <taxon>Alveolata</taxon>
        <taxon>Apicomplexa</taxon>
        <taxon>Aconoidasida</taxon>
        <taxon>Haemosporida</taxon>
        <taxon>Plasmodiidae</taxon>
        <taxon>Plasmodium</taxon>
        <taxon>Plasmodium (Vinckeia)</taxon>
    </lineage>
</organism>
<keyword id="KW-0461">Malaria</keyword>
<reference key="1">
    <citation type="journal article" date="1987" name="Nucleic Acids Res.">
        <title>Karyotype comparison between P. chabaudi and P. falciparum: analysis of a P. chabaudi cDNA containing sequences highly repetitive in P. falciparum.</title>
        <authorList>
            <person name="Langsley G."/>
            <person name="Sibilli L."/>
            <person name="Mattei D."/>
            <person name="Falanga P."/>
            <person name="Mercereau-Puijalon O."/>
        </authorList>
    </citation>
    <scope>NUCLEOTIDE SEQUENCE [MRNA]</scope>
</reference>
<accession>P14592</accession>
<protein>
    <recommendedName>
        <fullName>24 kDa antigen</fullName>
    </recommendedName>
</protein>
<feature type="chain" id="PRO_0000217175" description="24 kDa antigen">
    <location>
        <begin position="1" status="less than"/>
        <end position="37"/>
    </location>
</feature>
<feature type="non-terminal residue">
    <location>
        <position position="1"/>
    </location>
</feature>
<proteinExistence type="evidence at transcript level"/>